<organism>
    <name type="scientific">Rhodopseudomonas palustris (strain BisB18)</name>
    <dbReference type="NCBI Taxonomy" id="316056"/>
    <lineage>
        <taxon>Bacteria</taxon>
        <taxon>Pseudomonadati</taxon>
        <taxon>Pseudomonadota</taxon>
        <taxon>Alphaproteobacteria</taxon>
        <taxon>Hyphomicrobiales</taxon>
        <taxon>Nitrobacteraceae</taxon>
        <taxon>Rhodopseudomonas</taxon>
    </lineage>
</organism>
<protein>
    <recommendedName>
        <fullName evidence="1">Small ribosomal subunit protein uS14</fullName>
    </recommendedName>
    <alternativeName>
        <fullName evidence="3">30S ribosomal protein S14</fullName>
    </alternativeName>
</protein>
<proteinExistence type="inferred from homology"/>
<comment type="function">
    <text evidence="1">Binds 16S rRNA, required for the assembly of 30S particles and may also be responsible for determining the conformation of the 16S rRNA at the A site.</text>
</comment>
<comment type="subunit">
    <text evidence="1">Part of the 30S ribosomal subunit. Contacts proteins S3 and S10.</text>
</comment>
<comment type="similarity">
    <text evidence="1">Belongs to the universal ribosomal protein uS14 family.</text>
</comment>
<sequence length="101" mass="11465">MAKKSSIEKNNRRKRLTKNAAPKRAKLKAIIADKSKPMEERFAATLKLSEMPRNSSATRIRNRCEITGRARSVYRKNKLSRIAIRDLGSRGLVPGLVKSSW</sequence>
<evidence type="ECO:0000255" key="1">
    <source>
        <dbReference type="HAMAP-Rule" id="MF_00537"/>
    </source>
</evidence>
<evidence type="ECO:0000256" key="2">
    <source>
        <dbReference type="SAM" id="MobiDB-lite"/>
    </source>
</evidence>
<evidence type="ECO:0000305" key="3"/>
<feature type="chain" id="PRO_1000128540" description="Small ribosomal subunit protein uS14">
    <location>
        <begin position="1"/>
        <end position="101"/>
    </location>
</feature>
<feature type="region of interest" description="Disordered" evidence="2">
    <location>
        <begin position="1"/>
        <end position="24"/>
    </location>
</feature>
<feature type="compositionally biased region" description="Basic and acidic residues" evidence="2">
    <location>
        <begin position="1"/>
        <end position="10"/>
    </location>
</feature>
<feature type="compositionally biased region" description="Basic residues" evidence="2">
    <location>
        <begin position="11"/>
        <end position="24"/>
    </location>
</feature>
<reference key="1">
    <citation type="submission" date="2006-03" db="EMBL/GenBank/DDBJ databases">
        <title>Complete sequence of Rhodopseudomonas palustris BisB18.</title>
        <authorList>
            <consortium name="US DOE Joint Genome Institute"/>
            <person name="Copeland A."/>
            <person name="Lucas S."/>
            <person name="Lapidus A."/>
            <person name="Barry K."/>
            <person name="Detter J.C."/>
            <person name="Glavina del Rio T."/>
            <person name="Hammon N."/>
            <person name="Israni S."/>
            <person name="Dalin E."/>
            <person name="Tice H."/>
            <person name="Pitluck S."/>
            <person name="Chain P."/>
            <person name="Malfatti S."/>
            <person name="Shin M."/>
            <person name="Vergez L."/>
            <person name="Schmutz J."/>
            <person name="Larimer F."/>
            <person name="Land M."/>
            <person name="Hauser L."/>
            <person name="Pelletier D.A."/>
            <person name="Kyrpides N."/>
            <person name="Anderson I."/>
            <person name="Oda Y."/>
            <person name="Harwood C.S."/>
            <person name="Richardson P."/>
        </authorList>
    </citation>
    <scope>NUCLEOTIDE SEQUENCE [LARGE SCALE GENOMIC DNA]</scope>
    <source>
        <strain>BisB18</strain>
    </source>
</reference>
<dbReference type="EMBL" id="CP000301">
    <property type="protein sequence ID" value="ABD88975.1"/>
    <property type="molecule type" value="Genomic_DNA"/>
</dbReference>
<dbReference type="SMR" id="Q211G1"/>
<dbReference type="STRING" id="316056.RPC_3435"/>
<dbReference type="KEGG" id="rpc:RPC_3435"/>
<dbReference type="eggNOG" id="COG0199">
    <property type="taxonomic scope" value="Bacteria"/>
</dbReference>
<dbReference type="HOGENOM" id="CLU_139869_0_1_5"/>
<dbReference type="OrthoDB" id="9810484at2"/>
<dbReference type="GO" id="GO:0005737">
    <property type="term" value="C:cytoplasm"/>
    <property type="evidence" value="ECO:0007669"/>
    <property type="project" value="UniProtKB-ARBA"/>
</dbReference>
<dbReference type="GO" id="GO:0015935">
    <property type="term" value="C:small ribosomal subunit"/>
    <property type="evidence" value="ECO:0007669"/>
    <property type="project" value="TreeGrafter"/>
</dbReference>
<dbReference type="GO" id="GO:0019843">
    <property type="term" value="F:rRNA binding"/>
    <property type="evidence" value="ECO:0007669"/>
    <property type="project" value="UniProtKB-UniRule"/>
</dbReference>
<dbReference type="GO" id="GO:0003735">
    <property type="term" value="F:structural constituent of ribosome"/>
    <property type="evidence" value="ECO:0007669"/>
    <property type="project" value="InterPro"/>
</dbReference>
<dbReference type="GO" id="GO:0006412">
    <property type="term" value="P:translation"/>
    <property type="evidence" value="ECO:0007669"/>
    <property type="project" value="UniProtKB-UniRule"/>
</dbReference>
<dbReference type="FunFam" id="1.10.287.1480:FF:000001">
    <property type="entry name" value="30S ribosomal protein S14"/>
    <property type="match status" value="1"/>
</dbReference>
<dbReference type="Gene3D" id="1.10.287.1480">
    <property type="match status" value="1"/>
</dbReference>
<dbReference type="HAMAP" id="MF_00537">
    <property type="entry name" value="Ribosomal_uS14_1"/>
    <property type="match status" value="1"/>
</dbReference>
<dbReference type="InterPro" id="IPR001209">
    <property type="entry name" value="Ribosomal_uS14"/>
</dbReference>
<dbReference type="InterPro" id="IPR023036">
    <property type="entry name" value="Ribosomal_uS14_bac/plastid"/>
</dbReference>
<dbReference type="NCBIfam" id="NF006477">
    <property type="entry name" value="PRK08881.1"/>
    <property type="match status" value="1"/>
</dbReference>
<dbReference type="PANTHER" id="PTHR19836">
    <property type="entry name" value="30S RIBOSOMAL PROTEIN S14"/>
    <property type="match status" value="1"/>
</dbReference>
<dbReference type="PANTHER" id="PTHR19836:SF19">
    <property type="entry name" value="SMALL RIBOSOMAL SUBUNIT PROTEIN US14M"/>
    <property type="match status" value="1"/>
</dbReference>
<dbReference type="Pfam" id="PF00253">
    <property type="entry name" value="Ribosomal_S14"/>
    <property type="match status" value="1"/>
</dbReference>
<dbReference type="SUPFAM" id="SSF57716">
    <property type="entry name" value="Glucocorticoid receptor-like (DNA-binding domain)"/>
    <property type="match status" value="1"/>
</dbReference>
<gene>
    <name evidence="1" type="primary">rpsN</name>
    <name type="ordered locus">RPC_3435</name>
</gene>
<accession>Q211G1</accession>
<keyword id="KW-0687">Ribonucleoprotein</keyword>
<keyword id="KW-0689">Ribosomal protein</keyword>
<keyword id="KW-0694">RNA-binding</keyword>
<keyword id="KW-0699">rRNA-binding</keyword>
<name>RS14_RHOPB</name>